<feature type="chain" id="PRO_0000281913" description="Phenylalanine-4-hydroxylase">
    <location>
        <begin position="1"/>
        <end position="451"/>
    </location>
</feature>
<feature type="domain" description="ACT" evidence="3">
    <location>
        <begin position="35"/>
        <end position="113"/>
    </location>
</feature>
<feature type="binding site" evidence="2">
    <location>
        <position position="284"/>
    </location>
    <ligand>
        <name>Fe cation</name>
        <dbReference type="ChEBI" id="CHEBI:24875"/>
    </ligand>
</feature>
<feature type="binding site" evidence="2">
    <location>
        <position position="289"/>
    </location>
    <ligand>
        <name>Fe cation</name>
        <dbReference type="ChEBI" id="CHEBI:24875"/>
    </ligand>
</feature>
<feature type="binding site" evidence="2">
    <location>
        <position position="329"/>
    </location>
    <ligand>
        <name>Fe cation</name>
        <dbReference type="ChEBI" id="CHEBI:24875"/>
    </ligand>
</feature>
<feature type="modified residue" description="Phosphoserine; by PKA" evidence="1">
    <location>
        <position position="16"/>
    </location>
</feature>
<evidence type="ECO:0000250" key="1">
    <source>
        <dbReference type="UniProtKB" id="P00439"/>
    </source>
</evidence>
<evidence type="ECO:0000250" key="2">
    <source>
        <dbReference type="UniProtKB" id="P04176"/>
    </source>
</evidence>
<evidence type="ECO:0000255" key="3">
    <source>
        <dbReference type="PROSITE-ProRule" id="PRU01007"/>
    </source>
</evidence>
<evidence type="ECO:0000305" key="4"/>
<protein>
    <recommendedName>
        <fullName>Phenylalanine-4-hydroxylase</fullName>
        <shortName>PAH</shortName>
        <ecNumber evidence="1">1.14.16.1</ecNumber>
    </recommendedName>
    <alternativeName>
        <fullName>Phe-4-monooxygenase</fullName>
    </alternativeName>
</protein>
<reference key="1">
    <citation type="journal article" date="2005" name="BMC Genomics">
        <title>Characterization of 954 bovine full-CDS cDNA sequences.</title>
        <authorList>
            <person name="Harhay G.P."/>
            <person name="Sonstegard T.S."/>
            <person name="Keele J.W."/>
            <person name="Heaton M.P."/>
            <person name="Clawson M.L."/>
            <person name="Snelling W.M."/>
            <person name="Wiedmann R.T."/>
            <person name="Van Tassell C.P."/>
            <person name="Smith T.P.L."/>
        </authorList>
    </citation>
    <scope>NUCLEOTIDE SEQUENCE [LARGE SCALE MRNA]</scope>
</reference>
<reference key="2">
    <citation type="submission" date="2006-01" db="EMBL/GenBank/DDBJ databases">
        <authorList>
            <consortium name="NIH - Mammalian Gene Collection (MGC) project"/>
        </authorList>
    </citation>
    <scope>NUCLEOTIDE SEQUENCE [LARGE SCALE MRNA]</scope>
    <source>
        <strain>Hereford</strain>
        <tissue>Testis</tissue>
    </source>
</reference>
<proteinExistence type="evidence at transcript level"/>
<keyword id="KW-0021">Allosteric enzyme</keyword>
<keyword id="KW-0408">Iron</keyword>
<keyword id="KW-0479">Metal-binding</keyword>
<keyword id="KW-0503">Monooxygenase</keyword>
<keyword id="KW-0560">Oxidoreductase</keyword>
<keyword id="KW-0585">Phenylalanine catabolism</keyword>
<keyword id="KW-0597">Phosphoprotein</keyword>
<keyword id="KW-1185">Reference proteome</keyword>
<sequence>MSALVLESRALGRKLSDFGQETSYIEGNSDQNAVSLIFSLKEEVGALARVLRLFEENDINLTHIESRPSRLRKDEYEFFTNLDQRSVPALANIIKILRHDIGATVHELSRDKKKDTVPWFPRTIQELDNFANQVLSYGAELDADHPGFKDPVYRARRKQFADIAYNYRHGQPIPRVEYTEEEKKTWGTVFRTLKSLYKTHACYEHNHIFPLLEKYCGFREDNIPQLEEVSQFLQSCTGFRLRPVAGLLSSRDFLGGLAFRVFHCTQYIRHGSKPMYTPEPDICHELLGHVPLFSDRSFAQFSQEIGLASLGAPDEYIEKLATIYWFTVEFGLCKQGDSIKAYGAGLLSSFGELQYCLSDKPKLLPLELEKTAVQEYTITEFQPLYYVAESFNDAKEKVRNFAATIPRPFSVHYDPYTQRIEVLDNTQQLKILADSISSEVEILCSALQKLK</sequence>
<comment type="function">
    <text evidence="1">Catalyzes the hydroxylation of L-phenylalanine to L-tyrosine.</text>
</comment>
<comment type="catalytic activity">
    <reaction evidence="1">
        <text>(6R)-L-erythro-5,6,7,8-tetrahydrobiopterin + L-phenylalanine + O2 = (4aS,6R)-4a-hydroxy-L-erythro-5,6,7,8-tetrahydrobiopterin + L-tyrosine</text>
        <dbReference type="Rhea" id="RHEA:20273"/>
        <dbReference type="ChEBI" id="CHEBI:15379"/>
        <dbReference type="ChEBI" id="CHEBI:15642"/>
        <dbReference type="ChEBI" id="CHEBI:58095"/>
        <dbReference type="ChEBI" id="CHEBI:58315"/>
        <dbReference type="ChEBI" id="CHEBI:59560"/>
        <dbReference type="EC" id="1.14.16.1"/>
    </reaction>
</comment>
<comment type="cofactor">
    <cofactor evidence="2">
        <name>Fe(2+)</name>
        <dbReference type="ChEBI" id="CHEBI:29033"/>
    </cofactor>
</comment>
<comment type="activity regulation">
    <text evidence="1">N-terminal region of PAH is thought to contain allosteric binding sites for phenylalanine and to constitute an 'inhibitory' domain that regulates the activity of a catalytic domain in the C-terminal portion of the molecule.</text>
</comment>
<comment type="pathway">
    <text>Amino-acid degradation; L-phenylalanine degradation; acetoacetate and fumarate from L-phenylalanine: step 1/6.</text>
</comment>
<comment type="subunit">
    <text evidence="1">Homodimer and homotetramer.</text>
</comment>
<comment type="PTM">
    <text evidence="1">Phosphorylation at Ser-16 increases basal activity and facilitates activation by the substrate phenylalanine.</text>
</comment>
<comment type="similarity">
    <text evidence="4">Belongs to the biopterin-dependent aromatic amino acid hydroxylase family.</text>
</comment>
<name>PH4H_BOVIN</name>
<dbReference type="EC" id="1.14.16.1" evidence="1"/>
<dbReference type="EMBL" id="BT030585">
    <property type="protein sequence ID" value="ABQ13025.1"/>
    <property type="molecule type" value="mRNA"/>
</dbReference>
<dbReference type="EMBL" id="BC112633">
    <property type="protein sequence ID" value="AAI12634.1"/>
    <property type="molecule type" value="mRNA"/>
</dbReference>
<dbReference type="RefSeq" id="NP_001039523.1">
    <property type="nucleotide sequence ID" value="NM_001046058.2"/>
</dbReference>
<dbReference type="SMR" id="Q2KIH7"/>
<dbReference type="FunCoup" id="Q2KIH7">
    <property type="interactions" value="212"/>
</dbReference>
<dbReference type="STRING" id="9913.ENSBTAP00000065971"/>
<dbReference type="PaxDb" id="9913-ENSBTAP00000016999"/>
<dbReference type="Ensembl" id="ENSBTAT00000016999.7">
    <property type="protein sequence ID" value="ENSBTAP00000016999.7"/>
    <property type="gene ID" value="ENSBTAG00000012794.7"/>
</dbReference>
<dbReference type="GeneID" id="510583"/>
<dbReference type="KEGG" id="bta:510583"/>
<dbReference type="CTD" id="5053"/>
<dbReference type="VEuPathDB" id="HostDB:ENSBTAG00000012794"/>
<dbReference type="VGNC" id="VGNC:32554">
    <property type="gene designation" value="PAH"/>
</dbReference>
<dbReference type="eggNOG" id="KOG3820">
    <property type="taxonomic scope" value="Eukaryota"/>
</dbReference>
<dbReference type="GeneTree" id="ENSGT00950000182885"/>
<dbReference type="HOGENOM" id="CLU_023198_0_1_1"/>
<dbReference type="InParanoid" id="Q2KIH7"/>
<dbReference type="OMA" id="FHDEVYR"/>
<dbReference type="OrthoDB" id="983542at2759"/>
<dbReference type="TreeFam" id="TF313327"/>
<dbReference type="Reactome" id="R-BTA-8964208">
    <property type="pathway name" value="Phenylalanine metabolism"/>
</dbReference>
<dbReference type="UniPathway" id="UPA00139">
    <property type="reaction ID" value="UER00337"/>
</dbReference>
<dbReference type="Proteomes" id="UP000009136">
    <property type="component" value="Chromosome 5"/>
</dbReference>
<dbReference type="Bgee" id="ENSBTAG00000012794">
    <property type="expression patterns" value="Expressed in liver and 65 other cell types or tissues"/>
</dbReference>
<dbReference type="GO" id="GO:0005506">
    <property type="term" value="F:iron ion binding"/>
    <property type="evidence" value="ECO:0007669"/>
    <property type="project" value="InterPro"/>
</dbReference>
<dbReference type="GO" id="GO:0004505">
    <property type="term" value="F:phenylalanine 4-monooxygenase activity"/>
    <property type="evidence" value="ECO:0000318"/>
    <property type="project" value="GO_Central"/>
</dbReference>
<dbReference type="GO" id="GO:0006559">
    <property type="term" value="P:L-phenylalanine catabolic process"/>
    <property type="evidence" value="ECO:0007669"/>
    <property type="project" value="UniProtKB-UniPathway"/>
</dbReference>
<dbReference type="GO" id="GO:0006571">
    <property type="term" value="P:tyrosine biosynthetic process"/>
    <property type="evidence" value="ECO:0000318"/>
    <property type="project" value="GO_Central"/>
</dbReference>
<dbReference type="CDD" id="cd04931">
    <property type="entry name" value="ACT_PAH"/>
    <property type="match status" value="1"/>
</dbReference>
<dbReference type="CDD" id="cd03347">
    <property type="entry name" value="eu_PheOH"/>
    <property type="match status" value="1"/>
</dbReference>
<dbReference type="FunFam" id="1.10.800.10:FF:000003">
    <property type="entry name" value="Phenylalanine-4-hydroxylase"/>
    <property type="match status" value="1"/>
</dbReference>
<dbReference type="Gene3D" id="1.10.800.10">
    <property type="entry name" value="Aromatic amino acid hydroxylase"/>
    <property type="match status" value="1"/>
</dbReference>
<dbReference type="InterPro" id="IPR045865">
    <property type="entry name" value="ACT-like_dom_sf"/>
</dbReference>
<dbReference type="InterPro" id="IPR002912">
    <property type="entry name" value="ACT_dom"/>
</dbReference>
<dbReference type="InterPro" id="IPR001273">
    <property type="entry name" value="ArAA_hydroxylase"/>
</dbReference>
<dbReference type="InterPro" id="IPR018301">
    <property type="entry name" value="ArAA_hydroxylase_Fe/CU_BS"/>
</dbReference>
<dbReference type="InterPro" id="IPR036951">
    <property type="entry name" value="ArAA_hydroxylase_sf"/>
</dbReference>
<dbReference type="InterPro" id="IPR036329">
    <property type="entry name" value="Aro-AA_hydroxylase_C_sf"/>
</dbReference>
<dbReference type="InterPro" id="IPR019774">
    <property type="entry name" value="Aromatic-AA_hydroxylase_C"/>
</dbReference>
<dbReference type="InterPro" id="IPR041912">
    <property type="entry name" value="Euk_PheOH_cat"/>
</dbReference>
<dbReference type="InterPro" id="IPR005961">
    <property type="entry name" value="Phe-4-hydroxylase_tetra"/>
</dbReference>
<dbReference type="InterPro" id="IPR019773">
    <property type="entry name" value="Tyrosine_3-monooxygenase-like"/>
</dbReference>
<dbReference type="NCBIfam" id="TIGR01268">
    <property type="entry name" value="Phe4hydrox_tetr"/>
    <property type="match status" value="1"/>
</dbReference>
<dbReference type="PANTHER" id="PTHR11473">
    <property type="entry name" value="AROMATIC AMINO ACID HYDROXYLASE"/>
    <property type="match status" value="1"/>
</dbReference>
<dbReference type="PANTHER" id="PTHR11473:SF24">
    <property type="entry name" value="PHENYLALANINE-4-HYDROXYLASE"/>
    <property type="match status" value="1"/>
</dbReference>
<dbReference type="Pfam" id="PF01842">
    <property type="entry name" value="ACT"/>
    <property type="match status" value="1"/>
</dbReference>
<dbReference type="Pfam" id="PF00351">
    <property type="entry name" value="Biopterin_H"/>
    <property type="match status" value="1"/>
</dbReference>
<dbReference type="PIRSF" id="PIRSF000336">
    <property type="entry name" value="TH"/>
    <property type="match status" value="1"/>
</dbReference>
<dbReference type="PRINTS" id="PR00372">
    <property type="entry name" value="FYWHYDRXLASE"/>
</dbReference>
<dbReference type="SUPFAM" id="SSF55021">
    <property type="entry name" value="ACT-like"/>
    <property type="match status" value="1"/>
</dbReference>
<dbReference type="SUPFAM" id="SSF56534">
    <property type="entry name" value="Aromatic aminoacid monoxygenases, catalytic and oligomerization domains"/>
    <property type="match status" value="1"/>
</dbReference>
<dbReference type="PROSITE" id="PS51671">
    <property type="entry name" value="ACT"/>
    <property type="match status" value="1"/>
</dbReference>
<dbReference type="PROSITE" id="PS00367">
    <property type="entry name" value="BH4_AAA_HYDROXYL_1"/>
    <property type="match status" value="1"/>
</dbReference>
<dbReference type="PROSITE" id="PS51410">
    <property type="entry name" value="BH4_AAA_HYDROXYL_2"/>
    <property type="match status" value="1"/>
</dbReference>
<gene>
    <name type="primary">PAH</name>
</gene>
<accession>Q2KIH7</accession>
<accession>A5D9G6</accession>
<organism>
    <name type="scientific">Bos taurus</name>
    <name type="common">Bovine</name>
    <dbReference type="NCBI Taxonomy" id="9913"/>
    <lineage>
        <taxon>Eukaryota</taxon>
        <taxon>Metazoa</taxon>
        <taxon>Chordata</taxon>
        <taxon>Craniata</taxon>
        <taxon>Vertebrata</taxon>
        <taxon>Euteleostomi</taxon>
        <taxon>Mammalia</taxon>
        <taxon>Eutheria</taxon>
        <taxon>Laurasiatheria</taxon>
        <taxon>Artiodactyla</taxon>
        <taxon>Ruminantia</taxon>
        <taxon>Pecora</taxon>
        <taxon>Bovidae</taxon>
        <taxon>Bovinae</taxon>
        <taxon>Bos</taxon>
    </lineage>
</organism>